<reference key="1">
    <citation type="journal article" date="2001" name="Proc. Natl. Acad. Sci. U.S.A.">
        <title>Complete genome sequence of Caulobacter crescentus.</title>
        <authorList>
            <person name="Nierman W.C."/>
            <person name="Feldblyum T.V."/>
            <person name="Laub M.T."/>
            <person name="Paulsen I.T."/>
            <person name="Nelson K.E."/>
            <person name="Eisen J.A."/>
            <person name="Heidelberg J.F."/>
            <person name="Alley M.R.K."/>
            <person name="Ohta N."/>
            <person name="Maddock J.R."/>
            <person name="Potocka I."/>
            <person name="Nelson W.C."/>
            <person name="Newton A."/>
            <person name="Stephens C."/>
            <person name="Phadke N.D."/>
            <person name="Ely B."/>
            <person name="DeBoy R.T."/>
            <person name="Dodson R.J."/>
            <person name="Durkin A.S."/>
            <person name="Gwinn M.L."/>
            <person name="Haft D.H."/>
            <person name="Kolonay J.F."/>
            <person name="Smit J."/>
            <person name="Craven M.B."/>
            <person name="Khouri H.M."/>
            <person name="Shetty J."/>
            <person name="Berry K.J."/>
            <person name="Utterback T.R."/>
            <person name="Tran K."/>
            <person name="Wolf A.M."/>
            <person name="Vamathevan J.J."/>
            <person name="Ermolaeva M.D."/>
            <person name="White O."/>
            <person name="Salzberg S.L."/>
            <person name="Venter J.C."/>
            <person name="Shapiro L."/>
            <person name="Fraser C.M."/>
        </authorList>
    </citation>
    <scope>NUCLEOTIDE SEQUENCE [LARGE SCALE GENOMIC DNA]</scope>
    <source>
        <strain>ATCC 19089 / CIP 103742 / CB 15</strain>
    </source>
</reference>
<proteinExistence type="inferred from homology"/>
<feature type="chain" id="PRO_0000184233" description="Ribosomal RNA small subunit methyltransferase G">
    <location>
        <begin position="1"/>
        <end position="216"/>
    </location>
</feature>
<feature type="binding site" evidence="1">
    <location>
        <position position="82"/>
    </location>
    <ligand>
        <name>S-adenosyl-L-methionine</name>
        <dbReference type="ChEBI" id="CHEBI:59789"/>
    </ligand>
</feature>
<feature type="binding site" evidence="1">
    <location>
        <position position="87"/>
    </location>
    <ligand>
        <name>S-adenosyl-L-methionine</name>
        <dbReference type="ChEBI" id="CHEBI:59789"/>
    </ligand>
</feature>
<feature type="binding site" evidence="1">
    <location>
        <begin position="135"/>
        <end position="136"/>
    </location>
    <ligand>
        <name>S-adenosyl-L-methionine</name>
        <dbReference type="ChEBI" id="CHEBI:59789"/>
    </ligand>
</feature>
<feature type="binding site" evidence="1">
    <location>
        <position position="148"/>
    </location>
    <ligand>
        <name>S-adenosyl-L-methionine</name>
        <dbReference type="ChEBI" id="CHEBI:59789"/>
    </ligand>
</feature>
<organism>
    <name type="scientific">Caulobacter vibrioides (strain ATCC 19089 / CIP 103742 / CB 15)</name>
    <name type="common">Caulobacter crescentus</name>
    <dbReference type="NCBI Taxonomy" id="190650"/>
    <lineage>
        <taxon>Bacteria</taxon>
        <taxon>Pseudomonadati</taxon>
        <taxon>Pseudomonadota</taxon>
        <taxon>Alphaproteobacteria</taxon>
        <taxon>Caulobacterales</taxon>
        <taxon>Caulobacteraceae</taxon>
        <taxon>Caulobacter</taxon>
    </lineage>
</organism>
<name>RSMG_CAUVC</name>
<accession>P0CAW6</accession>
<accession>Q9XBF7</accession>
<comment type="function">
    <text evidence="1">Specifically methylates the N7 position of guanine in position 527 of 16S rRNA.</text>
</comment>
<comment type="catalytic activity">
    <reaction evidence="1">
        <text>guanosine(527) in 16S rRNA + S-adenosyl-L-methionine = N(7)-methylguanosine(527) in 16S rRNA + S-adenosyl-L-homocysteine</text>
        <dbReference type="Rhea" id="RHEA:42732"/>
        <dbReference type="Rhea" id="RHEA-COMP:10209"/>
        <dbReference type="Rhea" id="RHEA-COMP:10210"/>
        <dbReference type="ChEBI" id="CHEBI:57856"/>
        <dbReference type="ChEBI" id="CHEBI:59789"/>
        <dbReference type="ChEBI" id="CHEBI:74269"/>
        <dbReference type="ChEBI" id="CHEBI:74480"/>
        <dbReference type="EC" id="2.1.1.170"/>
    </reaction>
</comment>
<comment type="subcellular location">
    <subcellularLocation>
        <location evidence="1">Cytoplasm</location>
    </subcellularLocation>
</comment>
<comment type="similarity">
    <text evidence="1">Belongs to the methyltransferase superfamily. RNA methyltransferase RsmG family.</text>
</comment>
<comment type="sequence caution" evidence="2">
    <conflict type="erroneous initiation">
        <sequence resource="EMBL-CDS" id="AAK25716"/>
    </conflict>
</comment>
<protein>
    <recommendedName>
        <fullName evidence="1">Ribosomal RNA small subunit methyltransferase G</fullName>
        <ecNumber evidence="1">2.1.1.170</ecNumber>
    </recommendedName>
    <alternativeName>
        <fullName evidence="1">16S rRNA 7-methylguanosine methyltransferase</fullName>
        <shortName evidence="1">16S rRNA m7G methyltransferase</shortName>
    </alternativeName>
    <alternativeName>
        <fullName>Glucose-inhibited division protein B</fullName>
    </alternativeName>
</protein>
<dbReference type="EC" id="2.1.1.170" evidence="1"/>
<dbReference type="EMBL" id="AE005673">
    <property type="protein sequence ID" value="AAK25716.1"/>
    <property type="status" value="ALT_INIT"/>
    <property type="molecule type" value="Genomic_DNA"/>
</dbReference>
<dbReference type="PIR" id="H87714">
    <property type="entry name" value="H87714"/>
</dbReference>
<dbReference type="RefSeq" id="NP_422548.1">
    <property type="nucleotide sequence ID" value="NC_002696.2"/>
</dbReference>
<dbReference type="RefSeq" id="WP_015923358.1">
    <property type="nucleotide sequence ID" value="NC_002696.2"/>
</dbReference>
<dbReference type="SMR" id="P0CAW6"/>
<dbReference type="STRING" id="190650.CC_3754"/>
<dbReference type="EnsemblBacteria" id="AAK25716">
    <property type="protein sequence ID" value="AAK25716"/>
    <property type="gene ID" value="CC_3754"/>
</dbReference>
<dbReference type="KEGG" id="ccr:CC_3754"/>
<dbReference type="PATRIC" id="fig|190650.5.peg.3756"/>
<dbReference type="eggNOG" id="COG0357">
    <property type="taxonomic scope" value="Bacteria"/>
</dbReference>
<dbReference type="HOGENOM" id="CLU_065341_1_1_5"/>
<dbReference type="Proteomes" id="UP000001816">
    <property type="component" value="Chromosome"/>
</dbReference>
<dbReference type="GO" id="GO:0005829">
    <property type="term" value="C:cytosol"/>
    <property type="evidence" value="ECO:0007669"/>
    <property type="project" value="TreeGrafter"/>
</dbReference>
<dbReference type="GO" id="GO:0070043">
    <property type="term" value="F:rRNA (guanine-N7-)-methyltransferase activity"/>
    <property type="evidence" value="ECO:0007669"/>
    <property type="project" value="UniProtKB-UniRule"/>
</dbReference>
<dbReference type="Gene3D" id="3.40.50.150">
    <property type="entry name" value="Vaccinia Virus protein VP39"/>
    <property type="match status" value="1"/>
</dbReference>
<dbReference type="HAMAP" id="MF_00074">
    <property type="entry name" value="16SrRNA_methyltr_G"/>
    <property type="match status" value="1"/>
</dbReference>
<dbReference type="InterPro" id="IPR003682">
    <property type="entry name" value="rRNA_ssu_MeTfrase_G"/>
</dbReference>
<dbReference type="InterPro" id="IPR029063">
    <property type="entry name" value="SAM-dependent_MTases_sf"/>
</dbReference>
<dbReference type="NCBIfam" id="TIGR00138">
    <property type="entry name" value="rsmG_gidB"/>
    <property type="match status" value="1"/>
</dbReference>
<dbReference type="PANTHER" id="PTHR31760">
    <property type="entry name" value="S-ADENOSYL-L-METHIONINE-DEPENDENT METHYLTRANSFERASES SUPERFAMILY PROTEIN"/>
    <property type="match status" value="1"/>
</dbReference>
<dbReference type="PANTHER" id="PTHR31760:SF0">
    <property type="entry name" value="S-ADENOSYL-L-METHIONINE-DEPENDENT METHYLTRANSFERASES SUPERFAMILY PROTEIN"/>
    <property type="match status" value="1"/>
</dbReference>
<dbReference type="Pfam" id="PF02527">
    <property type="entry name" value="GidB"/>
    <property type="match status" value="1"/>
</dbReference>
<dbReference type="SUPFAM" id="SSF53335">
    <property type="entry name" value="S-adenosyl-L-methionine-dependent methyltransferases"/>
    <property type="match status" value="1"/>
</dbReference>
<sequence>MQPDLALAPEAVLDAAGFQALVGATDAQIEDLTRFQTLLAEWNEVMNLVGPLTIATYWTRHALDSAQLIPLAPEATAWADLGAGAGLPGVVLAILLKGRAGAKVHLVESMIKRCRFLEVVAKDLDLPVQIHNARAEDLKLKVDIVTARACAPMTKLLGFAEPYLRNGAVGLFLKGQDVETELSEARKAWTFESELRTSQSDPRGRIVQVKRLSRVR</sequence>
<keyword id="KW-0963">Cytoplasm</keyword>
<keyword id="KW-0489">Methyltransferase</keyword>
<keyword id="KW-1185">Reference proteome</keyword>
<keyword id="KW-0698">rRNA processing</keyword>
<keyword id="KW-0949">S-adenosyl-L-methionine</keyword>
<keyword id="KW-0808">Transferase</keyword>
<gene>
    <name evidence="1" type="primary">rsmG</name>
    <name type="synonym">gidB</name>
    <name type="ordered locus">CC_3754</name>
</gene>
<evidence type="ECO:0000255" key="1">
    <source>
        <dbReference type="HAMAP-Rule" id="MF_00074"/>
    </source>
</evidence>
<evidence type="ECO:0000305" key="2"/>